<evidence type="ECO:0000250" key="1"/>
<evidence type="ECO:0000250" key="2">
    <source>
        <dbReference type="UniProtKB" id="P00157"/>
    </source>
</evidence>
<evidence type="ECO:0000255" key="3">
    <source>
        <dbReference type="PROSITE-ProRule" id="PRU00967"/>
    </source>
</evidence>
<evidence type="ECO:0000255" key="4">
    <source>
        <dbReference type="PROSITE-ProRule" id="PRU00968"/>
    </source>
</evidence>
<protein>
    <recommendedName>
        <fullName>Cytochrome b</fullName>
    </recommendedName>
    <alternativeName>
        <fullName>Complex III subunit 3</fullName>
    </alternativeName>
    <alternativeName>
        <fullName>Complex III subunit III</fullName>
    </alternativeName>
    <alternativeName>
        <fullName>Cytochrome b-c1 complex subunit 3</fullName>
    </alternativeName>
    <alternativeName>
        <fullName>Ubiquinol-cytochrome-c reductase complex cytochrome b subunit</fullName>
    </alternativeName>
</protein>
<geneLocation type="mitochondrion"/>
<name>CYB_MIRAN</name>
<dbReference type="EMBL" id="AY377325">
    <property type="protein sequence ID" value="AAQ95104.1"/>
    <property type="molecule type" value="Genomic_DNA"/>
</dbReference>
<dbReference type="SMR" id="Q678S5"/>
<dbReference type="GO" id="GO:0005743">
    <property type="term" value="C:mitochondrial inner membrane"/>
    <property type="evidence" value="ECO:0007669"/>
    <property type="project" value="UniProtKB-SubCell"/>
</dbReference>
<dbReference type="GO" id="GO:0045275">
    <property type="term" value="C:respiratory chain complex III"/>
    <property type="evidence" value="ECO:0007669"/>
    <property type="project" value="InterPro"/>
</dbReference>
<dbReference type="GO" id="GO:0046872">
    <property type="term" value="F:metal ion binding"/>
    <property type="evidence" value="ECO:0007669"/>
    <property type="project" value="UniProtKB-KW"/>
</dbReference>
<dbReference type="GO" id="GO:0008121">
    <property type="term" value="F:ubiquinol-cytochrome-c reductase activity"/>
    <property type="evidence" value="ECO:0007669"/>
    <property type="project" value="InterPro"/>
</dbReference>
<dbReference type="GO" id="GO:0006122">
    <property type="term" value="P:mitochondrial electron transport, ubiquinol to cytochrome c"/>
    <property type="evidence" value="ECO:0007669"/>
    <property type="project" value="TreeGrafter"/>
</dbReference>
<dbReference type="CDD" id="cd00290">
    <property type="entry name" value="cytochrome_b_C"/>
    <property type="match status" value="1"/>
</dbReference>
<dbReference type="CDD" id="cd00284">
    <property type="entry name" value="Cytochrome_b_N"/>
    <property type="match status" value="1"/>
</dbReference>
<dbReference type="FunFam" id="1.20.810.10:FF:000002">
    <property type="entry name" value="Cytochrome b"/>
    <property type="match status" value="1"/>
</dbReference>
<dbReference type="Gene3D" id="1.20.810.10">
    <property type="entry name" value="Cytochrome Bc1 Complex, Chain C"/>
    <property type="match status" value="1"/>
</dbReference>
<dbReference type="InterPro" id="IPR005798">
    <property type="entry name" value="Cyt_b/b6_C"/>
</dbReference>
<dbReference type="InterPro" id="IPR036150">
    <property type="entry name" value="Cyt_b/b6_C_sf"/>
</dbReference>
<dbReference type="InterPro" id="IPR005797">
    <property type="entry name" value="Cyt_b/b6_N"/>
</dbReference>
<dbReference type="InterPro" id="IPR027387">
    <property type="entry name" value="Cytb/b6-like_sf"/>
</dbReference>
<dbReference type="InterPro" id="IPR030689">
    <property type="entry name" value="Cytochrome_b"/>
</dbReference>
<dbReference type="InterPro" id="IPR048260">
    <property type="entry name" value="Cytochrome_b_C_euk/bac"/>
</dbReference>
<dbReference type="InterPro" id="IPR048259">
    <property type="entry name" value="Cytochrome_b_N_euk/bac"/>
</dbReference>
<dbReference type="InterPro" id="IPR016174">
    <property type="entry name" value="Di-haem_cyt_TM"/>
</dbReference>
<dbReference type="PANTHER" id="PTHR19271">
    <property type="entry name" value="CYTOCHROME B"/>
    <property type="match status" value="1"/>
</dbReference>
<dbReference type="PANTHER" id="PTHR19271:SF16">
    <property type="entry name" value="CYTOCHROME B"/>
    <property type="match status" value="1"/>
</dbReference>
<dbReference type="Pfam" id="PF00032">
    <property type="entry name" value="Cytochrom_B_C"/>
    <property type="match status" value="1"/>
</dbReference>
<dbReference type="Pfam" id="PF00033">
    <property type="entry name" value="Cytochrome_B"/>
    <property type="match status" value="1"/>
</dbReference>
<dbReference type="PIRSF" id="PIRSF038885">
    <property type="entry name" value="COB"/>
    <property type="match status" value="1"/>
</dbReference>
<dbReference type="SUPFAM" id="SSF81648">
    <property type="entry name" value="a domain/subunit of cytochrome bc1 complex (Ubiquinol-cytochrome c reductase)"/>
    <property type="match status" value="1"/>
</dbReference>
<dbReference type="SUPFAM" id="SSF81342">
    <property type="entry name" value="Transmembrane di-heme cytochromes"/>
    <property type="match status" value="1"/>
</dbReference>
<dbReference type="PROSITE" id="PS51003">
    <property type="entry name" value="CYTB_CTER"/>
    <property type="match status" value="1"/>
</dbReference>
<dbReference type="PROSITE" id="PS51002">
    <property type="entry name" value="CYTB_NTER"/>
    <property type="match status" value="1"/>
</dbReference>
<gene>
    <name type="primary">MT-CYB</name>
    <name type="synonym">COB</name>
    <name type="synonym">CYTB</name>
    <name type="synonym">MTCYB</name>
</gene>
<sequence>MANIRKTHPLAKIINNSFIDLPTPPNISAWWNFGSLLGICLILQILTGLFLAMHYTSDTTTAFSSVTHICRDVNYGWIIRYMHANGASMFFICLYMHMGRGLYYGSYTFTETWNVGIILLFTIMATAFMGYVLPWGQMSFWGATVITNLLSAVPYVGNDLVQWIWGGFSVDKATLTRFFALHFILPFVALALAAVHLLFLHETGSNNPSGIPSDSDKIPFHPYYTIKDILGALLLILTLMLLVLFSPDLLGDPDNYIPANPLSTPPHIKPEWYFLFAYAILRSIPNKLGGVLALILSILILAIIPLLHTSSQRGMMFRPISQCLFWLLVADLLTLTWIGGQPVEHPYIIIGQLASILYFMILLVLMPITSIIENHILKW</sequence>
<keyword id="KW-0249">Electron transport</keyword>
<keyword id="KW-0349">Heme</keyword>
<keyword id="KW-0408">Iron</keyword>
<keyword id="KW-0472">Membrane</keyword>
<keyword id="KW-0479">Metal-binding</keyword>
<keyword id="KW-0496">Mitochondrion</keyword>
<keyword id="KW-0999">Mitochondrion inner membrane</keyword>
<keyword id="KW-0679">Respiratory chain</keyword>
<keyword id="KW-0812">Transmembrane</keyword>
<keyword id="KW-1133">Transmembrane helix</keyword>
<keyword id="KW-0813">Transport</keyword>
<keyword id="KW-0830">Ubiquinone</keyword>
<reference key="1">
    <citation type="journal article" date="2004" name="Mol. Phylogenet. Evol.">
        <title>A phylogeny of the extant Phocidae inferred from complete mitochondrial DNA coding regions.</title>
        <authorList>
            <person name="Davis C.S."/>
            <person name="Delisle I."/>
            <person name="Stirling I."/>
            <person name="Siniff D.B."/>
            <person name="Strobeck C."/>
        </authorList>
    </citation>
    <scope>NUCLEOTIDE SEQUENCE [GENOMIC DNA]</scope>
</reference>
<feature type="chain" id="PRO_0000254825" description="Cytochrome b">
    <location>
        <begin position="1"/>
        <end position="379"/>
    </location>
</feature>
<feature type="transmembrane region" description="Helical" evidence="2">
    <location>
        <begin position="33"/>
        <end position="53"/>
    </location>
</feature>
<feature type="transmembrane region" description="Helical" evidence="2">
    <location>
        <begin position="77"/>
        <end position="98"/>
    </location>
</feature>
<feature type="transmembrane region" description="Helical" evidence="2">
    <location>
        <begin position="113"/>
        <end position="133"/>
    </location>
</feature>
<feature type="transmembrane region" description="Helical" evidence="2">
    <location>
        <begin position="178"/>
        <end position="198"/>
    </location>
</feature>
<feature type="transmembrane region" description="Helical" evidence="2">
    <location>
        <begin position="226"/>
        <end position="246"/>
    </location>
</feature>
<feature type="transmembrane region" description="Helical" evidence="2">
    <location>
        <begin position="288"/>
        <end position="308"/>
    </location>
</feature>
<feature type="transmembrane region" description="Helical" evidence="2">
    <location>
        <begin position="320"/>
        <end position="340"/>
    </location>
</feature>
<feature type="transmembrane region" description="Helical" evidence="2">
    <location>
        <begin position="347"/>
        <end position="367"/>
    </location>
</feature>
<feature type="binding site" description="axial binding residue" evidence="2">
    <location>
        <position position="83"/>
    </location>
    <ligand>
        <name>heme b</name>
        <dbReference type="ChEBI" id="CHEBI:60344"/>
        <label>b562</label>
    </ligand>
    <ligandPart>
        <name>Fe</name>
        <dbReference type="ChEBI" id="CHEBI:18248"/>
    </ligandPart>
</feature>
<feature type="binding site" description="axial binding residue" evidence="2">
    <location>
        <position position="97"/>
    </location>
    <ligand>
        <name>heme b</name>
        <dbReference type="ChEBI" id="CHEBI:60344"/>
        <label>b566</label>
    </ligand>
    <ligandPart>
        <name>Fe</name>
        <dbReference type="ChEBI" id="CHEBI:18248"/>
    </ligandPart>
</feature>
<feature type="binding site" description="axial binding residue" evidence="2">
    <location>
        <position position="182"/>
    </location>
    <ligand>
        <name>heme b</name>
        <dbReference type="ChEBI" id="CHEBI:60344"/>
        <label>b562</label>
    </ligand>
    <ligandPart>
        <name>Fe</name>
        <dbReference type="ChEBI" id="CHEBI:18248"/>
    </ligandPart>
</feature>
<feature type="binding site" description="axial binding residue" evidence="2">
    <location>
        <position position="196"/>
    </location>
    <ligand>
        <name>heme b</name>
        <dbReference type="ChEBI" id="CHEBI:60344"/>
        <label>b566</label>
    </ligand>
    <ligandPart>
        <name>Fe</name>
        <dbReference type="ChEBI" id="CHEBI:18248"/>
    </ligandPart>
</feature>
<feature type="binding site" evidence="2">
    <location>
        <position position="201"/>
    </location>
    <ligand>
        <name>a ubiquinone</name>
        <dbReference type="ChEBI" id="CHEBI:16389"/>
    </ligand>
</feature>
<accession>Q678S5</accession>
<proteinExistence type="inferred from homology"/>
<comment type="function">
    <text evidence="2">Component of the ubiquinol-cytochrome c reductase complex (complex III or cytochrome b-c1 complex) that is part of the mitochondrial respiratory chain. The b-c1 complex mediates electron transfer from ubiquinol to cytochrome c. Contributes to the generation of a proton gradient across the mitochondrial membrane that is then used for ATP synthesis.</text>
</comment>
<comment type="cofactor">
    <cofactor evidence="2">
        <name>heme b</name>
        <dbReference type="ChEBI" id="CHEBI:60344"/>
    </cofactor>
    <text evidence="2">Binds 2 heme b groups non-covalently.</text>
</comment>
<comment type="subunit">
    <text evidence="2">The cytochrome bc1 complex contains 11 subunits: 3 respiratory subunits (MT-CYB, CYC1 and UQCRFS1), 2 core proteins (UQCRC1 and UQCRC2) and 6 low-molecular weight proteins (UQCRH/QCR6, UQCRB/QCR7, UQCRQ/QCR8, UQCR10/QCR9, UQCR11/QCR10 and a cleavage product of UQCRFS1). This cytochrome bc1 complex then forms a dimer.</text>
</comment>
<comment type="subcellular location">
    <subcellularLocation>
        <location evidence="2">Mitochondrion inner membrane</location>
        <topology evidence="2">Multi-pass membrane protein</topology>
    </subcellularLocation>
</comment>
<comment type="miscellaneous">
    <text evidence="1">Heme 1 (or BL or b562) is low-potential and absorbs at about 562 nm, and heme 2 (or BH or b566) is high-potential and absorbs at about 566 nm.</text>
</comment>
<comment type="similarity">
    <text evidence="3 4">Belongs to the cytochrome b family.</text>
</comment>
<comment type="caution">
    <text evidence="2">The full-length protein contains only eight transmembrane helices, not nine as predicted by bioinformatics tools.</text>
</comment>
<organism>
    <name type="scientific">Mirounga angustirostris</name>
    <name type="common">Northern elephant seal</name>
    <name type="synonym">Macrorhinus angustirostris</name>
    <dbReference type="NCBI Taxonomy" id="9716"/>
    <lineage>
        <taxon>Eukaryota</taxon>
        <taxon>Metazoa</taxon>
        <taxon>Chordata</taxon>
        <taxon>Craniata</taxon>
        <taxon>Vertebrata</taxon>
        <taxon>Euteleostomi</taxon>
        <taxon>Mammalia</taxon>
        <taxon>Eutheria</taxon>
        <taxon>Laurasiatheria</taxon>
        <taxon>Carnivora</taxon>
        <taxon>Caniformia</taxon>
        <taxon>Pinnipedia</taxon>
        <taxon>Phocidae</taxon>
        <taxon>Monachinae</taxon>
        <taxon>Miroungini</taxon>
        <taxon>Mirounga</taxon>
    </lineage>
</organism>